<reference key="1">
    <citation type="journal article" date="1993" name="Cell Adhes. Commun.">
        <title>Variants of the alpha 6 beta 1 laminin receptor in early murine development: distribution, molecular cloning and chromosomal localization of the mouse integrin alpha 6 subunit.</title>
        <authorList>
            <person name="Hierck B.P."/>
            <person name="Thorsteinsdottir S."/>
            <person name="Niessen C.M."/>
            <person name="Freund E."/>
            <person name="van Iperen L."/>
            <person name="Feyen A."/>
            <person name="Hogervorst F."/>
            <person name="Poelmann R.E."/>
            <person name="Mummery C.L."/>
            <person name="Sonnenberg A."/>
        </authorList>
    </citation>
    <scope>NUCLEOTIDE SEQUENCE [MRNA] (ISOFORMS ALPHA-6X1A AND ALPHA-6X1B)</scope>
    <scope>FUNCTION</scope>
    <source>
        <strain>BALB/cJ</strain>
        <tissue>Mammary gland</tissue>
    </source>
</reference>
<reference key="2">
    <citation type="journal article" date="2009" name="PLoS Biol.">
        <title>Lineage-specific biology revealed by a finished genome assembly of the mouse.</title>
        <authorList>
            <person name="Church D.M."/>
            <person name="Goodstadt L."/>
            <person name="Hillier L.W."/>
            <person name="Zody M.C."/>
            <person name="Goldstein S."/>
            <person name="She X."/>
            <person name="Bult C.J."/>
            <person name="Agarwala R."/>
            <person name="Cherry J.L."/>
            <person name="DiCuccio M."/>
            <person name="Hlavina W."/>
            <person name="Kapustin Y."/>
            <person name="Meric P."/>
            <person name="Maglott D."/>
            <person name="Birtle Z."/>
            <person name="Marques A.C."/>
            <person name="Graves T."/>
            <person name="Zhou S."/>
            <person name="Teague B."/>
            <person name="Potamousis K."/>
            <person name="Churas C."/>
            <person name="Place M."/>
            <person name="Herschleb J."/>
            <person name="Runnheim R."/>
            <person name="Forrest D."/>
            <person name="Amos-Landgraf J."/>
            <person name="Schwartz D.C."/>
            <person name="Cheng Z."/>
            <person name="Lindblad-Toh K."/>
            <person name="Eichler E.E."/>
            <person name="Ponting C.P."/>
        </authorList>
    </citation>
    <scope>NUCLEOTIDE SEQUENCE [LARGE SCALE GENOMIC DNA]</scope>
    <source>
        <strain>C57BL/6J</strain>
    </source>
</reference>
<reference key="3">
    <citation type="journal article" date="1996" name="Nat. Genet.">
        <title>Absence of integrin alpha 6 leads to epidermolysis bullosa and neonatal death in mice.</title>
        <authorList>
            <person name="Georges-Labouesse E."/>
            <person name="Messaddeq N."/>
            <person name="Yehia G."/>
            <person name="Cadalbert L."/>
            <person name="Dierich A."/>
            <person name="Le Meur M."/>
        </authorList>
    </citation>
    <scope>FUNCTION</scope>
    <scope>DISRUPTION PHENOTYPE</scope>
</reference>
<reference key="4">
    <citation type="journal article" date="2000" name="J. Cell Sci.">
        <title>Meltrin gamma(ADAM-9) mediates cellular adhesion through alpha(6)beta(1)integrin, leading to a marked induction of fibroblast cell motility.</title>
        <authorList>
            <person name="Nath D."/>
            <person name="Slocombe P.M."/>
            <person name="Webster A."/>
            <person name="Stephens P.E."/>
            <person name="Docherty A.J."/>
            <person name="Murphy G."/>
        </authorList>
    </citation>
    <scope>INTERACTION WITH ADAM9</scope>
</reference>
<reference key="5">
    <citation type="journal article" date="2000" name="Science">
        <title>Requirement of CD9 on the egg plasma membrane for fertilization.</title>
        <authorList>
            <person name="Miyado K."/>
            <person name="Yamada G."/>
            <person name="Yamada S."/>
            <person name="Hasuwa H."/>
            <person name="Nakamura Y."/>
            <person name="Ryu F."/>
            <person name="Suzuki K."/>
            <person name="Kosai K."/>
            <person name="Inoue K."/>
            <person name="Ogura A."/>
            <person name="Okabe M."/>
            <person name="Mekada E."/>
        </authorList>
    </citation>
    <scope>FUNCTION</scope>
    <scope>INTERACTION WITH CD9</scope>
</reference>
<reference key="6">
    <citation type="journal article" date="2001" name="J. Biol. Chem.">
        <title>Identification of a novel structural variant of the alpha 6 integrin.</title>
        <authorList>
            <person name="Davis T.L."/>
            <person name="Rabinovitz I."/>
            <person name="Futscher B.W."/>
            <person name="Schnoelzer M."/>
            <person name="Burger F."/>
            <person name="Liu Y."/>
            <person name="Kulesz-Martin M."/>
            <person name="Cress A.E."/>
        </authorList>
    </citation>
    <scope>PROTEOLYTIC PROCESSING</scope>
</reference>
<reference key="7">
    <citation type="journal article" date="2008" name="Open Cancer J.">
        <title>Integrin A6 cleavage in mouse skin tumors.</title>
        <authorList>
            <person name="Demetriou M.C."/>
            <person name="Kwei K.A."/>
            <person name="Powell M.B."/>
            <person name="Nagle R.B."/>
            <person name="Bowden G.T."/>
            <person name="Cress A.E."/>
        </authorList>
    </citation>
    <scope>PROTEOLYTIC PROCESSING</scope>
    <scope>TISSUE SPECIFICITY</scope>
</reference>
<reference key="8">
    <citation type="journal article" date="2009" name="Nat. Biotechnol.">
        <title>Mass-spectrometric identification and relative quantification of N-linked cell surface glycoproteins.</title>
        <authorList>
            <person name="Wollscheid B."/>
            <person name="Bausch-Fluck D."/>
            <person name="Henderson C."/>
            <person name="O'Brien R."/>
            <person name="Bibel M."/>
            <person name="Schiess R."/>
            <person name="Aebersold R."/>
            <person name="Watts J.D."/>
        </authorList>
    </citation>
    <scope>GLYCOSYLATION [LARGE SCALE ANALYSIS] AT ASN-284; ASN-927 AND ASN-958</scope>
</reference>
<reference key="9">
    <citation type="journal article" date="2010" name="Cell">
        <title>A tissue-specific atlas of mouse protein phosphorylation and expression.</title>
        <authorList>
            <person name="Huttlin E.L."/>
            <person name="Jedrychowski M.P."/>
            <person name="Elias J.E."/>
            <person name="Goswami T."/>
            <person name="Rad R."/>
            <person name="Beausoleil S.A."/>
            <person name="Villen J."/>
            <person name="Haas W."/>
            <person name="Sowa M.E."/>
            <person name="Gygi S.P."/>
        </authorList>
    </citation>
    <scope>IDENTIFICATION BY MASS SPECTROMETRY [LARGE SCALE ANALYSIS]</scope>
    <source>
        <tissue>Brain</tissue>
        <tissue>Brown adipose tissue</tissue>
        <tissue>Heart</tissue>
        <tissue>Kidney</tissue>
        <tissue>Liver</tissue>
        <tissue>Lung</tissue>
        <tissue>Pancreas</tissue>
        <tissue>Spleen</tissue>
        <tissue>Testis</tissue>
    </source>
</reference>
<dbReference type="EMBL" id="X69902">
    <property type="protein sequence ID" value="CAA49527.1"/>
    <property type="molecule type" value="mRNA"/>
</dbReference>
<dbReference type="EMBL" id="AL928963">
    <property type="status" value="NOT_ANNOTATED_CDS"/>
    <property type="molecule type" value="Genomic_DNA"/>
</dbReference>
<dbReference type="CCDS" id="CCDS16118.1">
    <molecule id="Q61739-2"/>
</dbReference>
<dbReference type="CCDS" id="CCDS71074.1">
    <molecule id="Q61739-1"/>
</dbReference>
<dbReference type="PIR" id="A40463">
    <property type="entry name" value="A40463"/>
</dbReference>
<dbReference type="RefSeq" id="NP_001264899.1">
    <molecule id="Q61739-1"/>
    <property type="nucleotide sequence ID" value="NM_001277970.2"/>
</dbReference>
<dbReference type="RefSeq" id="NP_001393187.1">
    <molecule id="Q61739-2"/>
    <property type="nucleotide sequence ID" value="NM_001406258.1"/>
</dbReference>
<dbReference type="RefSeq" id="XP_011237610.1">
    <molecule id="Q61739-1"/>
    <property type="nucleotide sequence ID" value="XM_011239308.2"/>
</dbReference>
<dbReference type="SMR" id="Q61739"/>
<dbReference type="BioGRID" id="200819">
    <property type="interactions" value="10"/>
</dbReference>
<dbReference type="ComplexPortal" id="CPX-3119">
    <property type="entry name" value="Integrin alpha6-beta1 complex"/>
</dbReference>
<dbReference type="ComplexPortal" id="CPX-3120">
    <property type="entry name" value="integrin alpha6-beta4 complex"/>
</dbReference>
<dbReference type="FunCoup" id="Q61739">
    <property type="interactions" value="1038"/>
</dbReference>
<dbReference type="IntAct" id="Q61739">
    <property type="interactions" value="1"/>
</dbReference>
<dbReference type="MINT" id="Q61739"/>
<dbReference type="STRING" id="10090.ENSMUSP00000107729"/>
<dbReference type="GlyConnect" id="2399">
    <property type="glycosylation" value="7 N-Linked glycans (4 sites)"/>
</dbReference>
<dbReference type="GlyCosmos" id="Q61739">
    <property type="glycosylation" value="8 sites, 7 glycans"/>
</dbReference>
<dbReference type="GlyGen" id="Q61739">
    <property type="glycosylation" value="8 sites, 9 N-linked glycans (5 sites)"/>
</dbReference>
<dbReference type="iPTMnet" id="Q61739"/>
<dbReference type="PhosphoSitePlus" id="Q61739"/>
<dbReference type="SwissPalm" id="Q61739"/>
<dbReference type="jPOST" id="Q61739"/>
<dbReference type="PaxDb" id="10090-ENSMUSP00000028522"/>
<dbReference type="PeptideAtlas" id="Q61739"/>
<dbReference type="ProteomicsDB" id="301686">
    <molecule id="Q61739-1"/>
</dbReference>
<dbReference type="ProteomicsDB" id="301687">
    <molecule id="Q61739-2"/>
</dbReference>
<dbReference type="Pumba" id="Q61739"/>
<dbReference type="Antibodypedia" id="1485">
    <property type="antibodies" value="1357 antibodies from 50 providers"/>
</dbReference>
<dbReference type="DNASU" id="16403"/>
<dbReference type="Ensembl" id="ENSMUST00000028522.10">
    <molecule id="Q61739-2"/>
    <property type="protein sequence ID" value="ENSMUSP00000028522.4"/>
    <property type="gene ID" value="ENSMUSG00000027111.17"/>
</dbReference>
<dbReference type="Ensembl" id="ENSMUST00000112101.8">
    <molecule id="Q61739-1"/>
    <property type="protein sequence ID" value="ENSMUSP00000107729.2"/>
    <property type="gene ID" value="ENSMUSG00000027111.17"/>
</dbReference>
<dbReference type="GeneID" id="16403"/>
<dbReference type="KEGG" id="mmu:16403"/>
<dbReference type="UCSC" id="uc008kbd.2">
    <molecule id="Q61739-1"/>
    <property type="organism name" value="mouse"/>
</dbReference>
<dbReference type="AGR" id="MGI:96605"/>
<dbReference type="CTD" id="3655"/>
<dbReference type="MGI" id="MGI:96605">
    <property type="gene designation" value="Itga6"/>
</dbReference>
<dbReference type="VEuPathDB" id="HostDB:ENSMUSG00000027111"/>
<dbReference type="eggNOG" id="KOG3637">
    <property type="taxonomic scope" value="Eukaryota"/>
</dbReference>
<dbReference type="GeneTree" id="ENSGT00940000155353"/>
<dbReference type="HOGENOM" id="CLU_004111_1_0_1"/>
<dbReference type="InParanoid" id="Q61739"/>
<dbReference type="OMA" id="AKKQWIT"/>
<dbReference type="OrthoDB" id="32375at9989"/>
<dbReference type="PhylomeDB" id="Q61739"/>
<dbReference type="TreeFam" id="TF105391"/>
<dbReference type="Reactome" id="R-MMU-210991">
    <property type="pathway name" value="Basigin interactions"/>
</dbReference>
<dbReference type="Reactome" id="R-MMU-216083">
    <property type="pathway name" value="Integrin cell surface interactions"/>
</dbReference>
<dbReference type="Reactome" id="R-MMU-3000157">
    <property type="pathway name" value="Laminin interactions"/>
</dbReference>
<dbReference type="Reactome" id="R-MMU-3000170">
    <property type="pathway name" value="Syndecan interactions"/>
</dbReference>
<dbReference type="Reactome" id="R-MMU-446107">
    <property type="pathway name" value="Type I hemidesmosome assembly"/>
</dbReference>
<dbReference type="BioGRID-ORCS" id="16403">
    <property type="hits" value="3 hits in 79 CRISPR screens"/>
</dbReference>
<dbReference type="ChiTaRS" id="Itga6">
    <property type="organism name" value="mouse"/>
</dbReference>
<dbReference type="PRO" id="PR:Q61739"/>
<dbReference type="Proteomes" id="UP000000589">
    <property type="component" value="Chromosome 2"/>
</dbReference>
<dbReference type="RNAct" id="Q61739">
    <property type="molecule type" value="protein"/>
</dbReference>
<dbReference type="Bgee" id="ENSMUSG00000027111">
    <property type="expression patterns" value="Expressed in sciatic nerve and 310 other cell types or tissues"/>
</dbReference>
<dbReference type="ExpressionAtlas" id="Q61739">
    <property type="expression patterns" value="baseline and differential"/>
</dbReference>
<dbReference type="GO" id="GO:0045178">
    <property type="term" value="C:basal part of cell"/>
    <property type="evidence" value="ECO:0000314"/>
    <property type="project" value="MGI"/>
</dbReference>
<dbReference type="GO" id="GO:0009925">
    <property type="term" value="C:basal plasma membrane"/>
    <property type="evidence" value="ECO:0000314"/>
    <property type="project" value="MGI"/>
</dbReference>
<dbReference type="GO" id="GO:0005604">
    <property type="term" value="C:basement membrane"/>
    <property type="evidence" value="ECO:0000314"/>
    <property type="project" value="MGI"/>
</dbReference>
<dbReference type="GO" id="GO:0016323">
    <property type="term" value="C:basolateral plasma membrane"/>
    <property type="evidence" value="ECO:0000314"/>
    <property type="project" value="MGI"/>
</dbReference>
<dbReference type="GO" id="GO:0009986">
    <property type="term" value="C:cell surface"/>
    <property type="evidence" value="ECO:0000314"/>
    <property type="project" value="MGI"/>
</dbReference>
<dbReference type="GO" id="GO:0009897">
    <property type="term" value="C:external side of plasma membrane"/>
    <property type="evidence" value="ECO:0000314"/>
    <property type="project" value="MGI"/>
</dbReference>
<dbReference type="GO" id="GO:0030056">
    <property type="term" value="C:hemidesmosome"/>
    <property type="evidence" value="ECO:0000314"/>
    <property type="project" value="MGI"/>
</dbReference>
<dbReference type="GO" id="GO:0008305">
    <property type="term" value="C:integrin complex"/>
    <property type="evidence" value="ECO:0000314"/>
    <property type="project" value="MGI"/>
</dbReference>
<dbReference type="GO" id="GO:0005886">
    <property type="term" value="C:plasma membrane"/>
    <property type="evidence" value="ECO:0000314"/>
    <property type="project" value="MGI"/>
</dbReference>
<dbReference type="GO" id="GO:0031994">
    <property type="term" value="F:insulin-like growth factor I binding"/>
    <property type="evidence" value="ECO:0000250"/>
    <property type="project" value="UniProtKB"/>
</dbReference>
<dbReference type="GO" id="GO:0005178">
    <property type="term" value="F:integrin binding"/>
    <property type="evidence" value="ECO:0000353"/>
    <property type="project" value="MGI"/>
</dbReference>
<dbReference type="GO" id="GO:0046872">
    <property type="term" value="F:metal ion binding"/>
    <property type="evidence" value="ECO:0007669"/>
    <property type="project" value="UniProtKB-KW"/>
</dbReference>
<dbReference type="GO" id="GO:0038132">
    <property type="term" value="F:neuregulin binding"/>
    <property type="evidence" value="ECO:0000250"/>
    <property type="project" value="UniProtKB"/>
</dbReference>
<dbReference type="GO" id="GO:0050873">
    <property type="term" value="P:brown fat cell differentiation"/>
    <property type="evidence" value="ECO:0000314"/>
    <property type="project" value="MGI"/>
</dbReference>
<dbReference type="GO" id="GO:0033627">
    <property type="term" value="P:cell adhesion mediated by integrin"/>
    <property type="evidence" value="ECO:0000314"/>
    <property type="project" value="MGI"/>
</dbReference>
<dbReference type="GO" id="GO:0007160">
    <property type="term" value="P:cell-matrix adhesion"/>
    <property type="evidence" value="ECO:0000315"/>
    <property type="project" value="MGI"/>
</dbReference>
<dbReference type="GO" id="GO:0046847">
    <property type="term" value="P:filopodium assembly"/>
    <property type="evidence" value="ECO:0000315"/>
    <property type="project" value="MGI"/>
</dbReference>
<dbReference type="GO" id="GO:0007229">
    <property type="term" value="P:integrin-mediated signaling pathway"/>
    <property type="evidence" value="ECO:0007669"/>
    <property type="project" value="UniProtKB-KW"/>
</dbReference>
<dbReference type="GO" id="GO:0050900">
    <property type="term" value="P:leukocyte migration"/>
    <property type="evidence" value="ECO:0000315"/>
    <property type="project" value="MGI"/>
</dbReference>
<dbReference type="GO" id="GO:0097534">
    <property type="term" value="P:lymphoid lineage cell migration"/>
    <property type="evidence" value="ECO:0000315"/>
    <property type="project" value="MGI"/>
</dbReference>
<dbReference type="GO" id="GO:0042475">
    <property type="term" value="P:odontogenesis of dentin-containing tooth"/>
    <property type="evidence" value="ECO:0000315"/>
    <property type="project" value="MGI"/>
</dbReference>
<dbReference type="GO" id="GO:0043065">
    <property type="term" value="P:positive regulation of apoptotic process"/>
    <property type="evidence" value="ECO:0000266"/>
    <property type="project" value="MGI"/>
</dbReference>
<dbReference type="GO" id="GO:0022409">
    <property type="term" value="P:positive regulation of cell-cell adhesion"/>
    <property type="evidence" value="ECO:0000314"/>
    <property type="project" value="MGI"/>
</dbReference>
<dbReference type="GO" id="GO:0010976">
    <property type="term" value="P:positive regulation of neuron projection development"/>
    <property type="evidence" value="ECO:0000315"/>
    <property type="project" value="UniProtKB"/>
</dbReference>
<dbReference type="FunFam" id="2.130.10.130:FF:000002">
    <property type="entry name" value="integrin alpha-6 isoform X2"/>
    <property type="match status" value="1"/>
</dbReference>
<dbReference type="FunFam" id="2.60.40.1510:FF:000002">
    <property type="entry name" value="integrin alpha-6 isoform X2"/>
    <property type="match status" value="1"/>
</dbReference>
<dbReference type="FunFam" id="2.60.40.1460:FF:000002">
    <property type="entry name" value="Integrin subunit alpha 6"/>
    <property type="match status" value="1"/>
</dbReference>
<dbReference type="FunFam" id="2.60.40.1530:FF:000001">
    <property type="entry name" value="Integrin subunit alpha 7"/>
    <property type="match status" value="1"/>
</dbReference>
<dbReference type="Gene3D" id="1.20.5.930">
    <property type="entry name" value="Bicelle-embedded integrin alpha(iib) transmembrane segment"/>
    <property type="match status" value="1"/>
</dbReference>
<dbReference type="Gene3D" id="2.130.10.130">
    <property type="entry name" value="Integrin alpha, N-terminal"/>
    <property type="match status" value="1"/>
</dbReference>
<dbReference type="Gene3D" id="2.60.40.1460">
    <property type="entry name" value="Integrin domains. Chain A, domain 2"/>
    <property type="match status" value="1"/>
</dbReference>
<dbReference type="Gene3D" id="2.60.40.1510">
    <property type="entry name" value="ntegrin, alpha v. Chain A, domain 3"/>
    <property type="match status" value="1"/>
</dbReference>
<dbReference type="Gene3D" id="2.60.40.1530">
    <property type="entry name" value="ntegrin, alpha v. Chain A, domain 4"/>
    <property type="match status" value="1"/>
</dbReference>
<dbReference type="InterPro" id="IPR013517">
    <property type="entry name" value="FG-GAP"/>
</dbReference>
<dbReference type="InterPro" id="IPR013519">
    <property type="entry name" value="Int_alpha_beta-p"/>
</dbReference>
<dbReference type="InterPro" id="IPR000413">
    <property type="entry name" value="Integrin_alpha"/>
</dbReference>
<dbReference type="InterPro" id="IPR018184">
    <property type="entry name" value="Integrin_alpha_C_CS"/>
</dbReference>
<dbReference type="InterPro" id="IPR013649">
    <property type="entry name" value="Integrin_alpha_Ig-like_1"/>
</dbReference>
<dbReference type="InterPro" id="IPR048285">
    <property type="entry name" value="Integrin_alpha_Ig-like_2"/>
</dbReference>
<dbReference type="InterPro" id="IPR048286">
    <property type="entry name" value="Integrin_alpha_Ig-like_3"/>
</dbReference>
<dbReference type="InterPro" id="IPR028994">
    <property type="entry name" value="Integrin_alpha_N"/>
</dbReference>
<dbReference type="InterPro" id="IPR032695">
    <property type="entry name" value="Integrin_dom_sf"/>
</dbReference>
<dbReference type="PANTHER" id="PTHR23220">
    <property type="entry name" value="INTEGRIN ALPHA"/>
    <property type="match status" value="1"/>
</dbReference>
<dbReference type="PANTHER" id="PTHR23220:SF9">
    <property type="entry name" value="INTEGRIN ALPHA-6"/>
    <property type="match status" value="1"/>
</dbReference>
<dbReference type="Pfam" id="PF01839">
    <property type="entry name" value="FG-GAP"/>
    <property type="match status" value="2"/>
</dbReference>
<dbReference type="Pfam" id="PF08441">
    <property type="entry name" value="Integrin_A_Ig_1"/>
    <property type="match status" value="1"/>
</dbReference>
<dbReference type="Pfam" id="PF20805">
    <property type="entry name" value="Integrin_A_Ig_2"/>
    <property type="match status" value="1"/>
</dbReference>
<dbReference type="Pfam" id="PF20806">
    <property type="entry name" value="Integrin_A_Ig_3"/>
    <property type="match status" value="1"/>
</dbReference>
<dbReference type="PRINTS" id="PR01185">
    <property type="entry name" value="INTEGRINA"/>
</dbReference>
<dbReference type="SMART" id="SM00191">
    <property type="entry name" value="Int_alpha"/>
    <property type="match status" value="5"/>
</dbReference>
<dbReference type="SUPFAM" id="SSF69318">
    <property type="entry name" value="Integrin alpha N-terminal domain"/>
    <property type="match status" value="1"/>
</dbReference>
<dbReference type="SUPFAM" id="SSF69179">
    <property type="entry name" value="Integrin domains"/>
    <property type="match status" value="3"/>
</dbReference>
<dbReference type="PROSITE" id="PS51470">
    <property type="entry name" value="FG_GAP"/>
    <property type="match status" value="7"/>
</dbReference>
<dbReference type="PROSITE" id="PS00242">
    <property type="entry name" value="INTEGRIN_ALPHA"/>
    <property type="match status" value="1"/>
</dbReference>
<gene>
    <name type="primary">Itga6</name>
</gene>
<comment type="function">
    <text evidence="3 6 11 12">Integrin alpha-6/beta-1 (ITGA6:ITGB1) is a receptor for laminin on platelets (PubMed:8081870). Integrin alpha-6/beta-1 (ITGA6:ITGB1) is present in oocytes and is involved in sperm-egg fusion (PubMed:10634791). Integrin alpha-6/beta-4 (ITGA6:ITGB4) is a receptor for laminin in epithelial cells and it plays a critical structural role in the hemidesmosome (PubMed:8673141). ITGA6:ITGB4 binds to NRG1 (via EGF domain) and this binding is essential for NRG1-ERBB signaling (By similarity). ITGA6:ITGB4 binds to IGF1 and this binding is essential for IGF1 signaling (By similarity). ITGA6:ITGB4 binds to IGF2 and this binding is essential for IGF2 signaling (By similarity).</text>
</comment>
<comment type="subunit">
    <text evidence="3 6 7 11">Heterodimer of an alpha and a beta subunit (PubMed:8081870). The alpha subunit is composed of a heavy and a light chain linked by a disulfide bond (PubMed:8081870). Alpha-6 associates with either beta-1 (ITGB1) or beta-4 (ITGB4) to form ITGA6:ITGB1 and ITGA6:ITGB4, respectively (PubMed:10634791, PubMed:8081870). ITGA6:ITGB1 is found in a complex with CD9; interaction takes place in oocytes and is involved in sperm-egg fusion (PubMed:10634791). ITGA6:ITGB4 is found in a ternary complex with NRG1 and ERBB3 (By similarity). ITGA6:ITGB4 is found in a ternary complex with IGF1 and IGF1R (By similarity). ITGA6:ITGB4 interacts with IGF2 (By similarity). Interacts with ADAM9 (PubMed:10825303). Interacts with RAB21 (By similarity). Interacts with MDK. ITGA6:ITGB1 interacts with MDK; this interaction mediates MDK-induced neurite outgrowth (By similarity). Interacts with CD82; this interaction down-regulates ITGA6-mediated cell adhesion (By similarity).</text>
</comment>
<comment type="subcellular location">
    <subcellularLocation>
        <location evidence="3">Cell membrane</location>
        <topology evidence="4">Single-pass type I membrane protein</topology>
    </subcellularLocation>
    <subcellularLocation>
        <location evidence="3">Cell membrane</location>
        <topology evidence="3">Lipid-anchor</topology>
    </subcellularLocation>
</comment>
<comment type="alternative products">
    <event type="alternative splicing"/>
    <isoform>
        <id>Q61739-1</id>
        <name>Alpha-6X1B</name>
        <sequence type="displayed"/>
    </isoform>
    <isoform>
        <id>Q61739-2</id>
        <name>Alpha-6X1A</name>
        <sequence type="described" ref="VSP_002726"/>
    </isoform>
</comment>
<comment type="tissue specificity">
    <molecule>Processed integrin alpha-6</molecule>
    <text evidence="10">Expressed at low levels in normal skin tissue with elevated levels in skin tumors.</text>
</comment>
<comment type="PTM">
    <text evidence="3">Isoforms containing segment A, but not segment B, are the major targets for PMA-induced phosphorylation. Phosphorylation occurs on 'Ser-1064' of isoform alpha-6X1A. Phosphorylation is not required for the induction of integrin alpha-6A/beta-1 high affinity but may reduce the affinity for ligand (By similarity).</text>
</comment>
<comment type="PTM">
    <text evidence="8 10">Undergoes PLAU-mediated cleavage at residues Arg-595-596-Arg in a time-dependent manner to produce processed integrin alpha-6 (alpha6p).</text>
</comment>
<comment type="PTM">
    <text evidence="3">Palmitoylation by DHHC3 enhances stability and cell surface expression.</text>
</comment>
<comment type="disruption phenotype">
    <text evidence="12">Mice expressing a null mutation of the alpha-6 subunit gene die soon after birth and develop severe blistering (PubMed:8673141). The blisters are due to separation of the basal epithelial cells from a normally formed basement membrane (PubMed:8673141).</text>
</comment>
<comment type="similarity">
    <text evidence="15">Belongs to the integrin alpha chain family.</text>
</comment>
<evidence type="ECO:0000250" key="1"/>
<evidence type="ECO:0000250" key="2">
    <source>
        <dbReference type="UniProtKB" id="P08648"/>
    </source>
</evidence>
<evidence type="ECO:0000250" key="3">
    <source>
        <dbReference type="UniProtKB" id="P23229"/>
    </source>
</evidence>
<evidence type="ECO:0000255" key="4"/>
<evidence type="ECO:0000255" key="5">
    <source>
        <dbReference type="PROSITE-ProRule" id="PRU00803"/>
    </source>
</evidence>
<evidence type="ECO:0000269" key="6">
    <source>
    </source>
</evidence>
<evidence type="ECO:0000269" key="7">
    <source>
    </source>
</evidence>
<evidence type="ECO:0000269" key="8">
    <source>
    </source>
</evidence>
<evidence type="ECO:0000269" key="9">
    <source>
    </source>
</evidence>
<evidence type="ECO:0000269" key="10">
    <source>
    </source>
</evidence>
<evidence type="ECO:0000269" key="11">
    <source>
    </source>
</evidence>
<evidence type="ECO:0000269" key="12">
    <source>
    </source>
</evidence>
<evidence type="ECO:0000303" key="13">
    <source>
    </source>
</evidence>
<evidence type="ECO:0000303" key="14">
    <source>
    </source>
</evidence>
<evidence type="ECO:0000305" key="15"/>
<name>ITA6_MOUSE</name>
<keyword id="KW-0025">Alternative splicing</keyword>
<keyword id="KW-0106">Calcium</keyword>
<keyword id="KW-0130">Cell adhesion</keyword>
<keyword id="KW-1003">Cell membrane</keyword>
<keyword id="KW-0165">Cleavage on pair of basic residues</keyword>
<keyword id="KW-1015">Disulfide bond</keyword>
<keyword id="KW-0325">Glycoprotein</keyword>
<keyword id="KW-0401">Integrin</keyword>
<keyword id="KW-0449">Lipoprotein</keyword>
<keyword id="KW-0472">Membrane</keyword>
<keyword id="KW-0479">Metal-binding</keyword>
<keyword id="KW-0564">Palmitate</keyword>
<keyword id="KW-0597">Phosphoprotein</keyword>
<keyword id="KW-0675">Receptor</keyword>
<keyword id="KW-1185">Reference proteome</keyword>
<keyword id="KW-0677">Repeat</keyword>
<keyword id="KW-0732">Signal</keyword>
<keyword id="KW-0812">Transmembrane</keyword>
<keyword id="KW-1133">Transmembrane helix</keyword>
<feature type="signal peptide" evidence="3">
    <location>
        <begin position="1"/>
        <end position="23"/>
    </location>
</feature>
<feature type="chain" id="PRO_0000016261" description="Integrin alpha-6">
    <location>
        <begin position="24"/>
        <end position="1091"/>
    </location>
</feature>
<feature type="chain" id="PRO_0000016262" description="Integrin alpha-6 heavy chain" evidence="4">
    <location>
        <begin position="24"/>
        <end position="899"/>
    </location>
</feature>
<feature type="chain" id="PRO_0000448082" description="Processed integrin alpha-6" evidence="3">
    <location>
        <begin position="597"/>
        <end position="1091"/>
    </location>
</feature>
<feature type="chain" id="PRO_0000016263" description="Integrin alpha-6 light chain" evidence="4">
    <location>
        <begin position="903"/>
        <end position="1091"/>
    </location>
</feature>
<feature type="topological domain" description="Extracellular" evidence="4">
    <location>
        <begin position="24"/>
        <end position="1011"/>
    </location>
</feature>
<feature type="transmembrane region" description="Helical" evidence="4">
    <location>
        <begin position="1012"/>
        <end position="1037"/>
    </location>
</feature>
<feature type="topological domain" description="Cytoplasmic" evidence="4">
    <location>
        <begin position="1038"/>
        <end position="1091"/>
    </location>
</feature>
<feature type="repeat" description="FG-GAP 1" evidence="5">
    <location>
        <begin position="30"/>
        <end position="95"/>
    </location>
</feature>
<feature type="repeat" description="FG-GAP 2" evidence="5">
    <location>
        <begin position="101"/>
        <end position="166"/>
    </location>
</feature>
<feature type="repeat" description="FG-GAP 3" evidence="5">
    <location>
        <begin position="176"/>
        <end position="229"/>
    </location>
</feature>
<feature type="repeat" description="FG-GAP 4" evidence="5">
    <location>
        <begin position="244"/>
        <end position="300"/>
    </location>
</feature>
<feature type="repeat" description="FG-GAP 5" evidence="5">
    <location>
        <begin position="301"/>
        <end position="363"/>
    </location>
</feature>
<feature type="repeat" description="FG-GAP 6" evidence="5">
    <location>
        <begin position="364"/>
        <end position="419"/>
    </location>
</feature>
<feature type="repeat" description="FG-GAP 7" evidence="5">
    <location>
        <begin position="420"/>
        <end position="479"/>
    </location>
</feature>
<feature type="short sequence motif" description="GFFKR motif">
    <location>
        <begin position="1040"/>
        <end position="1044"/>
    </location>
</feature>
<feature type="binding site" evidence="2">
    <location>
        <position position="324"/>
    </location>
    <ligand>
        <name>Ca(2+)</name>
        <dbReference type="ChEBI" id="CHEBI:29108"/>
        <label>1</label>
    </ligand>
</feature>
<feature type="binding site" evidence="2">
    <location>
        <position position="326"/>
    </location>
    <ligand>
        <name>Ca(2+)</name>
        <dbReference type="ChEBI" id="CHEBI:29108"/>
        <label>1</label>
    </ligand>
</feature>
<feature type="binding site" evidence="2">
    <location>
        <position position="328"/>
    </location>
    <ligand>
        <name>Ca(2+)</name>
        <dbReference type="ChEBI" id="CHEBI:29108"/>
        <label>1</label>
    </ligand>
</feature>
<feature type="binding site" evidence="2">
    <location>
        <position position="332"/>
    </location>
    <ligand>
        <name>Ca(2+)</name>
        <dbReference type="ChEBI" id="CHEBI:29108"/>
        <label>1</label>
    </ligand>
</feature>
<feature type="binding site" evidence="2">
    <location>
        <position position="386"/>
    </location>
    <ligand>
        <name>Ca(2+)</name>
        <dbReference type="ChEBI" id="CHEBI:29108"/>
        <label>2</label>
    </ligand>
</feature>
<feature type="binding site" evidence="2">
    <location>
        <position position="388"/>
    </location>
    <ligand>
        <name>Ca(2+)</name>
        <dbReference type="ChEBI" id="CHEBI:29108"/>
        <label>2</label>
    </ligand>
</feature>
<feature type="binding site" evidence="2">
    <location>
        <position position="390"/>
    </location>
    <ligand>
        <name>Ca(2+)</name>
        <dbReference type="ChEBI" id="CHEBI:29108"/>
        <label>2</label>
    </ligand>
</feature>
<feature type="binding site" evidence="2">
    <location>
        <position position="392"/>
    </location>
    <ligand>
        <name>Ca(2+)</name>
        <dbReference type="ChEBI" id="CHEBI:29108"/>
        <label>2</label>
    </ligand>
</feature>
<feature type="binding site" evidence="2">
    <location>
        <position position="394"/>
    </location>
    <ligand>
        <name>Ca(2+)</name>
        <dbReference type="ChEBI" id="CHEBI:29108"/>
        <label>2</label>
    </ligand>
</feature>
<feature type="binding site" evidence="2">
    <location>
        <position position="441"/>
    </location>
    <ligand>
        <name>Ca(2+)</name>
        <dbReference type="ChEBI" id="CHEBI:29108"/>
        <label>3</label>
    </ligand>
</feature>
<feature type="binding site" evidence="2">
    <location>
        <position position="443"/>
    </location>
    <ligand>
        <name>Ca(2+)</name>
        <dbReference type="ChEBI" id="CHEBI:29108"/>
        <label>3</label>
    </ligand>
</feature>
<feature type="binding site" evidence="2">
    <location>
        <position position="445"/>
    </location>
    <ligand>
        <name>Ca(2+)</name>
        <dbReference type="ChEBI" id="CHEBI:29108"/>
        <label>3</label>
    </ligand>
</feature>
<feature type="binding site" evidence="2">
    <location>
        <position position="447"/>
    </location>
    <ligand>
        <name>Ca(2+)</name>
        <dbReference type="ChEBI" id="CHEBI:29108"/>
        <label>3</label>
    </ligand>
</feature>
<feature type="binding site" evidence="2">
    <location>
        <position position="449"/>
    </location>
    <ligand>
        <name>Ca(2+)</name>
        <dbReference type="ChEBI" id="CHEBI:29108"/>
        <label>3</label>
    </ligand>
</feature>
<feature type="lipid moiety-binding region" description="S-palmitoyl cysteine; by DHHC3" evidence="1">
    <location>
        <position position="1039"/>
    </location>
</feature>
<feature type="glycosylation site" description="N-linked (GlcNAc...) asparagine" evidence="4">
    <location>
        <position position="78"/>
    </location>
</feature>
<feature type="glycosylation site" description="N-linked (GlcNAc...) asparagine" evidence="4">
    <location>
        <position position="223"/>
    </location>
</feature>
<feature type="glycosylation site" description="N-linked (GlcNAc...) asparagine" evidence="9">
    <location>
        <position position="284"/>
    </location>
</feature>
<feature type="glycosylation site" description="N-linked (GlcNAc...) asparagine" evidence="4">
    <location>
        <position position="370"/>
    </location>
</feature>
<feature type="glycosylation site" description="N-linked (GlcNAc...) asparagine" evidence="4">
    <location>
        <position position="731"/>
    </location>
</feature>
<feature type="glycosylation site" description="N-linked (GlcNAc...) asparagine" evidence="4">
    <location>
        <position position="746"/>
    </location>
</feature>
<feature type="glycosylation site" description="N-linked (GlcNAc...) asparagine" evidence="9">
    <location>
        <position position="927"/>
    </location>
</feature>
<feature type="glycosylation site" description="N-linked (GlcNAc...) asparagine" evidence="9">
    <location>
        <position position="958"/>
    </location>
</feature>
<feature type="disulfide bond" evidence="1">
    <location>
        <begin position="86"/>
        <end position="94"/>
    </location>
</feature>
<feature type="disulfide bond" evidence="1">
    <location>
        <begin position="131"/>
        <end position="154"/>
    </location>
</feature>
<feature type="disulfide bond" evidence="1">
    <location>
        <begin position="175"/>
        <end position="188"/>
    </location>
</feature>
<feature type="disulfide bond" evidence="1">
    <location>
        <begin position="489"/>
        <end position="496"/>
    </location>
</feature>
<feature type="disulfide bond" evidence="1">
    <location>
        <begin position="502"/>
        <end position="562"/>
    </location>
</feature>
<feature type="disulfide bond" evidence="1">
    <location>
        <begin position="626"/>
        <end position="632"/>
    </location>
</feature>
<feature type="disulfide bond" evidence="1">
    <location>
        <begin position="726"/>
        <end position="737"/>
    </location>
</feature>
<feature type="disulfide bond" description="Interchain (between heavy and light chains)" evidence="1">
    <location>
        <begin position="881"/>
        <end position="928"/>
    </location>
</feature>
<feature type="disulfide bond" evidence="1">
    <location>
        <begin position="934"/>
        <end position="939"/>
    </location>
</feature>
<feature type="splice variant" id="VSP_002726" description="In isoform Alpha-6X1A." evidence="14">
    <original>SRYDDSIPRYHAVRIRKEEREIKDEKHMDNLEKKQWITKWNENESYS</original>
    <variation>NKKDHYDATYHKAEIHTQPSDKERLTSDA</variation>
    <location>
        <begin position="1045"/>
        <end position="1091"/>
    </location>
</feature>
<feature type="sequence conflict" description="In Ref. 1; CAA49527." evidence="15" ref="1">
    <original>S</original>
    <variation>T</variation>
    <location>
        <position position="592"/>
    </location>
</feature>
<feature type="sequence conflict" description="In Ref. 1; CAA49527." evidence="15" ref="1">
    <original>N</original>
    <variation>K</variation>
    <location>
        <position position="781"/>
    </location>
</feature>
<feature type="sequence conflict" description="In Ref. 1; CAA49527." evidence="15" ref="1">
    <original>V</original>
    <variation>L</variation>
    <location>
        <position position="799"/>
    </location>
</feature>
<feature type="sequence conflict" description="In Ref. 1; CAA49527." evidence="15" ref="1">
    <original>S</original>
    <variation>T</variation>
    <location>
        <position position="946"/>
    </location>
</feature>
<feature type="sequence conflict" description="In Ref. 1; CAA49527." evidence="15" ref="1">
    <original>R</original>
    <variation>C</variation>
    <location>
        <position position="953"/>
    </location>
</feature>
<feature type="sequence conflict" description="In Ref. 1; CAA49527." evidence="15" ref="1">
    <original>L</original>
    <variation>V</variation>
    <location>
        <position position="975"/>
    </location>
</feature>
<feature type="modified residue" description="Phosphoserine" evidence="3">
    <location sequence="Q61739-2">
        <position position="1064"/>
    </location>
</feature>
<accession>Q61739</accession>
<accession>A2AU04</accession>
<organism>
    <name type="scientific">Mus musculus</name>
    <name type="common">Mouse</name>
    <dbReference type="NCBI Taxonomy" id="10090"/>
    <lineage>
        <taxon>Eukaryota</taxon>
        <taxon>Metazoa</taxon>
        <taxon>Chordata</taxon>
        <taxon>Craniata</taxon>
        <taxon>Vertebrata</taxon>
        <taxon>Euteleostomi</taxon>
        <taxon>Mammalia</taxon>
        <taxon>Eutheria</taxon>
        <taxon>Euarchontoglires</taxon>
        <taxon>Glires</taxon>
        <taxon>Rodentia</taxon>
        <taxon>Myomorpha</taxon>
        <taxon>Muroidea</taxon>
        <taxon>Muridae</taxon>
        <taxon>Murinae</taxon>
        <taxon>Mus</taxon>
        <taxon>Mus</taxon>
    </lineage>
</organism>
<sequence length="1091" mass="122159">MAVAGQLCLLYLSAGLLARLGTAFNLDTREDNVIRKSGDPGSLFGFSLAMHWQLQPEDKRLLLVGAPRAEALPLQRANRTGGLYSCDITSRGPCTRIEFDNDADPMSESKEDQWMGVTVQSQGPGGKVVTCAHRYEKRQHVNTKQESRDIFGRCYVLSQNLRIEDDMDGGDWSFCDGRLRGHEKFGSCQQGVAATFTKDFHYIVFGAPGTYNWKGIVRVEQKNNTFFDMNIFEDGPYEVGGETDHDESLVPVPANSYLGFSLDSGKGIVSKDDITFVSGAPRANHSGAVVLLKRDMKSAHLLPEYIFDGEGLASSFGYDVAVVDLNADGWQDIVIGAPQYFDRDGEVGGAVYVYINQQGKWSNVKPIRLNGTKDSMFGISVKNIGDINQDGYPDIAVGAPYDDLGKVFIYHGSPTGIITKPTQVLEGTSPYFGYSIAGNMDLDRNSYPDLAVGSLSDSVTIFRSRPVINILKTITVTPNRIDLRQKSMCGSPSGICLKVKACFEYTAKPSGYNPPISILGILEAEKERRKSGLSSRVQFRNQGSEPKYTQELTLNRQKQRACMEETLWLQENIRDKLRPIPITASVEIQEPSSRRRVNSLPEVLPILNSNEAKTVQTDVHFLKEGCGDDNVCNSNLKLEYKFGTREGNQDKFSYLPIQKGIPELVLKDQKDIALEITVTNSPSDPRNPRKDGDDAHEAKLIATFPDTLTYSAYRELRAFPEKQLSCVANQNGSQADCELGNPFKRNSSVTFYLILSTTEVTFDTTDLDINLKLETTSNQDNLAPITAKAKVVIELLLSVSGVAKPSQVYFGGTVVGEQAMKSEDEVGSLIEYEFRVINLGKPLKNLGTATLNIQWPKEISNGKWLLYLMKVESKGLEQIVCEPHNEINYLKLKESHNSRKKRELPEKQIDDSRKFSLFPERKYQTLNCSVNVRCVNIRCPLRGLDSKASLVLRSRLWNSTFLEEYSKLNYLDILLRASIDVTAAAQNIKLPHAGTQVRVTVFPSKTVAQYSGVAWWIILLAVLAGILMLALLVFLLWKCGFFKRSRYDDSIPRYHAVRIRKEEREIKDEKHMDNLEKKQWITKWNENESYS</sequence>
<proteinExistence type="evidence at protein level"/>
<protein>
    <recommendedName>
        <fullName>Integrin alpha-6</fullName>
    </recommendedName>
    <alternativeName>
        <fullName>CD49 antigen-like family member F</fullName>
    </alternativeName>
    <alternativeName>
        <fullName>VLA-6</fullName>
    </alternativeName>
    <cdAntigenName>CD49f</cdAntigenName>
    <component>
        <recommendedName>
            <fullName>Integrin alpha-6 heavy chain</fullName>
        </recommendedName>
    </component>
    <component>
        <recommendedName>
            <fullName>Integrin alpha-6 light chain</fullName>
        </recommendedName>
    </component>
    <component>
        <recommendedName>
            <fullName>Processed integrin alpha-6</fullName>
            <shortName evidence="13">Alpha6p</shortName>
        </recommendedName>
    </component>
</protein>